<organism>
    <name type="scientific">Oryza sativa subsp. japonica</name>
    <name type="common">Rice</name>
    <dbReference type="NCBI Taxonomy" id="39947"/>
    <lineage>
        <taxon>Eukaryota</taxon>
        <taxon>Viridiplantae</taxon>
        <taxon>Streptophyta</taxon>
        <taxon>Embryophyta</taxon>
        <taxon>Tracheophyta</taxon>
        <taxon>Spermatophyta</taxon>
        <taxon>Magnoliopsida</taxon>
        <taxon>Liliopsida</taxon>
        <taxon>Poales</taxon>
        <taxon>Poaceae</taxon>
        <taxon>BOP clade</taxon>
        <taxon>Oryzoideae</taxon>
        <taxon>Oryzeae</taxon>
        <taxon>Oryzinae</taxon>
        <taxon>Oryza</taxon>
        <taxon>Oryza sativa</taxon>
    </lineage>
</organism>
<dbReference type="EMBL" id="AJ535049">
    <property type="protein sequence ID" value="CAD59571.1"/>
    <property type="status" value="ALT_SEQ"/>
    <property type="molecule type" value="Genomic_DNA"/>
</dbReference>
<dbReference type="EMBL" id="AP002523">
    <property type="status" value="NOT_ANNOTATED_CDS"/>
    <property type="molecule type" value="Genomic_DNA"/>
</dbReference>
<dbReference type="EMBL" id="AP002903">
    <property type="status" value="NOT_ANNOTATED_CDS"/>
    <property type="molecule type" value="Genomic_DNA"/>
</dbReference>
<dbReference type="EMBL" id="AP008207">
    <property type="protein sequence ID" value="BAF04101.1"/>
    <property type="status" value="ALT_SEQ"/>
    <property type="molecule type" value="Genomic_DNA"/>
</dbReference>
<dbReference type="EMBL" id="AP014957">
    <property type="status" value="NOT_ANNOTATED_CDS"/>
    <property type="molecule type" value="Genomic_DNA"/>
</dbReference>
<dbReference type="EMBL" id="AK061474">
    <property type="status" value="NOT_ANNOTATED_CDS"/>
    <property type="molecule type" value="mRNA"/>
</dbReference>
<dbReference type="SMR" id="Q8GU87"/>
<dbReference type="FunCoup" id="Q8GU87">
    <property type="interactions" value="424"/>
</dbReference>
<dbReference type="STRING" id="39947.Q8GU87"/>
<dbReference type="PaxDb" id="39947-Q8GU87"/>
<dbReference type="EnsemblPlants" id="Os01t0177900-01">
    <property type="protein sequence ID" value="Os01t0177900-01"/>
    <property type="gene ID" value="Os01g0177900"/>
</dbReference>
<dbReference type="Gramene" id="Os01t0177900-01">
    <property type="protein sequence ID" value="Os01t0177900-01"/>
    <property type="gene ID" value="Os01g0177900"/>
</dbReference>
<dbReference type="KEGG" id="dosa:Os01g0177900"/>
<dbReference type="eggNOG" id="KOG0065">
    <property type="taxonomic scope" value="Eukaryota"/>
</dbReference>
<dbReference type="InParanoid" id="Q8GU87"/>
<dbReference type="Proteomes" id="UP000000763">
    <property type="component" value="Chromosome 1"/>
</dbReference>
<dbReference type="Proteomes" id="UP000059680">
    <property type="component" value="Chromosome 1"/>
</dbReference>
<dbReference type="ExpressionAtlas" id="Q8GU87">
    <property type="expression patterns" value="baseline and differential"/>
</dbReference>
<dbReference type="GO" id="GO:0016020">
    <property type="term" value="C:membrane"/>
    <property type="evidence" value="ECO:0007669"/>
    <property type="project" value="UniProtKB-SubCell"/>
</dbReference>
<dbReference type="GO" id="GO:0140359">
    <property type="term" value="F:ABC-type transporter activity"/>
    <property type="evidence" value="ECO:0007669"/>
    <property type="project" value="InterPro"/>
</dbReference>
<dbReference type="GO" id="GO:0005524">
    <property type="term" value="F:ATP binding"/>
    <property type="evidence" value="ECO:0007669"/>
    <property type="project" value="UniProtKB-KW"/>
</dbReference>
<dbReference type="GO" id="GO:0016887">
    <property type="term" value="F:ATP hydrolysis activity"/>
    <property type="evidence" value="ECO:0007669"/>
    <property type="project" value="InterPro"/>
</dbReference>
<dbReference type="CDD" id="cd03233">
    <property type="entry name" value="ABCG_PDR_domain1"/>
    <property type="match status" value="1"/>
</dbReference>
<dbReference type="CDD" id="cd03232">
    <property type="entry name" value="ABCG_PDR_domain2"/>
    <property type="match status" value="1"/>
</dbReference>
<dbReference type="FunFam" id="3.40.50.300:FF:000157">
    <property type="entry name" value="ABC transporter G family member 34"/>
    <property type="match status" value="1"/>
</dbReference>
<dbReference type="FunFam" id="3.40.50.300:FF:000179">
    <property type="entry name" value="ABC transporter G family member 34"/>
    <property type="match status" value="1"/>
</dbReference>
<dbReference type="Gene3D" id="3.40.50.300">
    <property type="entry name" value="P-loop containing nucleotide triphosphate hydrolases"/>
    <property type="match status" value="2"/>
</dbReference>
<dbReference type="InterPro" id="IPR003593">
    <property type="entry name" value="AAA+_ATPase"/>
</dbReference>
<dbReference type="InterPro" id="IPR013525">
    <property type="entry name" value="ABC2_TM"/>
</dbReference>
<dbReference type="InterPro" id="IPR029481">
    <property type="entry name" value="ABC_trans_N"/>
</dbReference>
<dbReference type="InterPro" id="IPR003439">
    <property type="entry name" value="ABC_transporter-like_ATP-bd"/>
</dbReference>
<dbReference type="InterPro" id="IPR043926">
    <property type="entry name" value="ABCG_dom"/>
</dbReference>
<dbReference type="InterPro" id="IPR034001">
    <property type="entry name" value="ABCG_PDR_1"/>
</dbReference>
<dbReference type="InterPro" id="IPR034003">
    <property type="entry name" value="ABCG_PDR_2"/>
</dbReference>
<dbReference type="InterPro" id="IPR027417">
    <property type="entry name" value="P-loop_NTPase"/>
</dbReference>
<dbReference type="InterPro" id="IPR013581">
    <property type="entry name" value="PDR_assoc"/>
</dbReference>
<dbReference type="PANTHER" id="PTHR48040:SF12">
    <property type="entry name" value="ABC TRANSPORTER G FAMILY MEMBER 32-LIKE ISOFORM X1"/>
    <property type="match status" value="1"/>
</dbReference>
<dbReference type="PANTHER" id="PTHR48040">
    <property type="entry name" value="PLEIOTROPIC DRUG RESISTANCE PROTEIN 1-LIKE ISOFORM X1"/>
    <property type="match status" value="1"/>
</dbReference>
<dbReference type="Pfam" id="PF01061">
    <property type="entry name" value="ABC2_membrane"/>
    <property type="match status" value="2"/>
</dbReference>
<dbReference type="Pfam" id="PF19055">
    <property type="entry name" value="ABC2_membrane_7"/>
    <property type="match status" value="1"/>
</dbReference>
<dbReference type="Pfam" id="PF00005">
    <property type="entry name" value="ABC_tran"/>
    <property type="match status" value="2"/>
</dbReference>
<dbReference type="Pfam" id="PF14510">
    <property type="entry name" value="ABC_trans_N"/>
    <property type="match status" value="1"/>
</dbReference>
<dbReference type="Pfam" id="PF08370">
    <property type="entry name" value="PDR_assoc"/>
    <property type="match status" value="1"/>
</dbReference>
<dbReference type="SMART" id="SM00382">
    <property type="entry name" value="AAA"/>
    <property type="match status" value="2"/>
</dbReference>
<dbReference type="SUPFAM" id="SSF52540">
    <property type="entry name" value="P-loop containing nucleoside triphosphate hydrolases"/>
    <property type="match status" value="2"/>
</dbReference>
<dbReference type="PROSITE" id="PS50893">
    <property type="entry name" value="ABC_TRANSPORTER_2"/>
    <property type="match status" value="2"/>
</dbReference>
<accession>Q8GU87</accession>
<accession>Q0JQ77</accession>
<name>AB31G_ORYSJ</name>
<gene>
    <name evidence="6" type="primary">ABCG31</name>
    <name evidence="4 5" type="synonym">PDR6</name>
    <name evidence="10" type="ordered locus">Os01g0177900</name>
    <name type="ordered locus">LOC_Os01g08260</name>
    <name evidence="8" type="ORF">P0013F10</name>
    <name evidence="9" type="ORF">P0509B06</name>
</gene>
<evidence type="ECO:0000250" key="1"/>
<evidence type="ECO:0000255" key="2"/>
<evidence type="ECO:0000255" key="3">
    <source>
        <dbReference type="PROSITE-ProRule" id="PRU00434"/>
    </source>
</evidence>
<evidence type="ECO:0000303" key="4">
    <source>
    </source>
</evidence>
<evidence type="ECO:0000303" key="5">
    <source>
    </source>
</evidence>
<evidence type="ECO:0000303" key="6">
    <source>
    </source>
</evidence>
<evidence type="ECO:0000305" key="7"/>
<evidence type="ECO:0000312" key="8">
    <source>
        <dbReference type="EMBL" id="AP002523"/>
    </source>
</evidence>
<evidence type="ECO:0000312" key="9">
    <source>
        <dbReference type="EMBL" id="AP002903"/>
    </source>
</evidence>
<evidence type="ECO:0000312" key="10">
    <source>
        <dbReference type="EMBL" id="BAF04101.1"/>
    </source>
</evidence>
<proteinExistence type="evidence at transcript level"/>
<sequence length="1426" mass="161680">MWAAEAAFARSGSWREEEDEQEALRWAALQRLPTVARARRGLLRSPAPGEDRVQGDDALCEVDVAGLSPGDRTALVDRLLADSGDVEDFFRRIRSRFDAVQIEFPKIEVRYEDLTVDAYVHVGSRALPTIPNFICNMTEAFLRHLRIYRGGRVKLPILDNVSGIIRPSRMTLLLGPPSSGKTTLLLALAGRLGPGLKVSGNITYNGHHLNEFVPQRTSAYVSQQDWHASEMTVRETLEFAGRCQGVGIKYDMLVELLRREKNEGIKPDEDLDVFMKALALEGKQTSLVAEYIMKVYGLDICADTIVGDEMIKGISGGQKKRLTTGELLVGSARVLFMDEISTGLDSATTYQIIKYLRHSTHALDGTTIISLLQPAPETYELFDDVILISEGQIVYQGPREYAVDFFAGMGFRCPERKNVADFLQEVLSKKDQQQYWCHYDYPYQYVSVSKFAEAFKTFVIGKRLHDELAVPYNRHRNHPAALSTSNYGVRRLELLKSNFQWQHLLMKRNSFIYVFKFIQLLLVALITMTVFFRSTMHRDSVDDGIIYLGALYFAIVMILFNGFTEVSLLVTKLPILYKHRDLHFYPPWAYTLPSWLLSIPTSLIESGMWVLVTYYVVGYDPQFTRCLGQFLLLFFLHQTSLALFRVMASLGRNMIVANTFGSFALLVVMILGGFIITKESIPAWWIWGYWISPMMYAQNAISVNEFLGHSWSQQFANQNITLGEAILTGYGLFKEKYWFWIGVGALFGYAIVLNFLFTLFLTLLNPIGNIQAVVSKDDIQHRAPRRKNGKLALELRSYLHSASLNGHNLKDQKGMVLPFQPLSMCFKNINYYVDVPAELKSQGIVEDRLQLLIDVTGAFRPGILTALVGVSGAGKTTLMDVLAGRKTGGLIEGSITISGYPKNQETFTRISGYCEQNDVHSPCLTVIESLLYSACLRLPSHVDVNTRRVFVEEVMELVELNALSGALVGLPGVNGLSTEQRKRLTIAVELVANPSIVFMDEPTSGLDARSAAIVMRTVRNIVNTGRTIVCTIHQPSIDIFESFDELLFMKRGGQLIYAGPLGSKSRNLVEFFEAIPGVPKIRDGYNPAAWMLEVTSTQMEQILGVDFAEYYRQSKLFQQTQEMVDILSRPRRESKELTFATKYSQPFFAQYAACLWKQNLSYWRNPQYTAVRFFYTVIISLMFGTICWKFGSRRETQHDIFNAMGAMYAAVLFIGITNATSVQPVISIERFVSYRERAAGMYSALPFAFSLVTVEFPYILVQSLIYGTIFYSLGSFEWTAVKFLWYLFFMYFTLLYFTFYGMMTTAITPNHTVAPIIAAPFYTLWNLFCGFMIPRKRIPAWWRWYYWANPVSWTLYGLLTSQFGDLDQPLLLADGITTTTAVDFLRDHFGFRHDFLGVVAGMVAGFCVLFAVVFALAIKYLNFQRR</sequence>
<feature type="chain" id="PRO_0000234648" description="ABC transporter G family member 31">
    <location>
        <begin position="1"/>
        <end position="1426"/>
    </location>
</feature>
<feature type="transmembrane region" description="Helical" evidence="2">
    <location>
        <begin position="511"/>
        <end position="531"/>
    </location>
</feature>
<feature type="transmembrane region" description="Helical" evidence="2">
    <location>
        <begin position="544"/>
        <end position="564"/>
    </location>
</feature>
<feature type="transmembrane region" description="Helical" evidence="2">
    <location>
        <begin position="592"/>
        <end position="612"/>
    </location>
</feature>
<feature type="transmembrane region" description="Helical" evidence="2">
    <location>
        <begin position="630"/>
        <end position="650"/>
    </location>
</feature>
<feature type="transmembrane region" description="Helical" evidence="2">
    <location>
        <begin position="655"/>
        <end position="675"/>
    </location>
</feature>
<feature type="transmembrane region" description="Helical" evidence="2">
    <location>
        <begin position="681"/>
        <end position="701"/>
    </location>
</feature>
<feature type="transmembrane region" description="Helical" evidence="2">
    <location>
        <begin position="741"/>
        <end position="761"/>
    </location>
</feature>
<feature type="transmembrane region" description="Helical" evidence="2">
    <location>
        <begin position="1168"/>
        <end position="1188"/>
    </location>
</feature>
<feature type="transmembrane region" description="Helical" evidence="2">
    <location>
        <begin position="1200"/>
        <end position="1220"/>
    </location>
</feature>
<feature type="transmembrane region" description="Helical" evidence="2">
    <location>
        <begin position="1245"/>
        <end position="1265"/>
    </location>
</feature>
<feature type="transmembrane region" description="Helical" evidence="2">
    <location>
        <begin position="1283"/>
        <end position="1303"/>
    </location>
</feature>
<feature type="transmembrane region" description="Helical" evidence="2">
    <location>
        <begin position="1313"/>
        <end position="1333"/>
    </location>
</feature>
<feature type="transmembrane region" description="Helical" evidence="2">
    <location>
        <begin position="1341"/>
        <end position="1363"/>
    </location>
</feature>
<feature type="transmembrane region" description="Helical" evidence="2">
    <location>
        <begin position="1398"/>
        <end position="1418"/>
    </location>
</feature>
<feature type="domain" description="ABC transporter 1" evidence="3">
    <location>
        <begin position="142"/>
        <end position="415"/>
    </location>
</feature>
<feature type="domain" description="ABC transmembrane type-2 1">
    <location>
        <begin position="493"/>
        <end position="706"/>
    </location>
</feature>
<feature type="domain" description="ABC transporter 2" evidence="3">
    <location>
        <begin position="824"/>
        <end position="1076"/>
    </location>
</feature>
<feature type="domain" description="ABC transmembrane type-2 2">
    <location>
        <begin position="1149"/>
        <end position="1363"/>
    </location>
</feature>
<feature type="binding site" evidence="3">
    <location>
        <begin position="175"/>
        <end position="182"/>
    </location>
    <ligand>
        <name>ATP</name>
        <dbReference type="ChEBI" id="CHEBI:30616"/>
        <label>1</label>
    </ligand>
</feature>
<feature type="binding site" evidence="3">
    <location>
        <begin position="869"/>
        <end position="876"/>
    </location>
    <ligand>
        <name>ATP</name>
        <dbReference type="ChEBI" id="CHEBI:30616"/>
        <label>2</label>
    </ligand>
</feature>
<feature type="sequence conflict" description="In Ref. 6; AK061474." evidence="7" ref="6">
    <original>I</original>
    <variation>F</variation>
    <location>
        <position position="1179"/>
    </location>
</feature>
<comment type="function">
    <text evidence="1">May be a general defense protein.</text>
</comment>
<comment type="subcellular location">
    <subcellularLocation>
        <location evidence="2">Membrane</location>
        <topology evidence="2">Multi-pass membrane protein</topology>
    </subcellularLocation>
</comment>
<comment type="similarity">
    <text evidence="7">Belongs to the ABC transporter superfamily. ABCG family. PDR (TC 3.A.1.205) subfamily.</text>
</comment>
<comment type="sequence caution" evidence="7">
    <conflict type="erroneous gene model prediction">
        <sequence resource="EMBL-CDS" id="BAF04101"/>
    </conflict>
</comment>
<comment type="sequence caution" evidence="7">
    <conflict type="erroneous gene model prediction">
        <sequence resource="EMBL-CDS" id="CAD59571"/>
    </conflict>
</comment>
<protein>
    <recommendedName>
        <fullName evidence="6">ABC transporter G family member 31</fullName>
        <shortName evidence="6">OsABCG31</shortName>
    </recommendedName>
    <alternativeName>
        <fullName evidence="4 5">Pleiotropic drug resistance protein 6</fullName>
        <shortName evidence="5">OsPDR6</shortName>
    </alternativeName>
</protein>
<keyword id="KW-0067">ATP-binding</keyword>
<keyword id="KW-0472">Membrane</keyword>
<keyword id="KW-0547">Nucleotide-binding</keyword>
<keyword id="KW-1185">Reference proteome</keyword>
<keyword id="KW-0677">Repeat</keyword>
<keyword id="KW-0812">Transmembrane</keyword>
<keyword id="KW-1133">Transmembrane helix</keyword>
<keyword id="KW-0813">Transport</keyword>
<reference key="1">
    <citation type="journal article" date="2003" name="Plant Physiol.">
        <title>The ATP-binding cassette transporters: structure, function, and gene family comparison between rice and Arabidopsis.</title>
        <authorList>
            <person name="Jasinski M."/>
            <person name="Ducos E."/>
            <person name="Martinoia E."/>
            <person name="Boutry M."/>
        </authorList>
    </citation>
    <scope>NUCLEOTIDE SEQUENCE [GENOMIC DNA]</scope>
    <source>
        <strain>cv. Nipponbare</strain>
    </source>
</reference>
<reference key="2">
    <citation type="journal article" date="2002" name="Nature">
        <title>The genome sequence and structure of rice chromosome 1.</title>
        <authorList>
            <person name="Sasaki T."/>
            <person name="Matsumoto T."/>
            <person name="Yamamoto K."/>
            <person name="Sakata K."/>
            <person name="Baba T."/>
            <person name="Katayose Y."/>
            <person name="Wu J."/>
            <person name="Niimura Y."/>
            <person name="Cheng Z."/>
            <person name="Nagamura Y."/>
            <person name="Antonio B.A."/>
            <person name="Kanamori H."/>
            <person name="Hosokawa S."/>
            <person name="Masukawa M."/>
            <person name="Arikawa K."/>
            <person name="Chiden Y."/>
            <person name="Hayashi M."/>
            <person name="Okamoto M."/>
            <person name="Ando T."/>
            <person name="Aoki H."/>
            <person name="Arita K."/>
            <person name="Hamada M."/>
            <person name="Harada C."/>
            <person name="Hijishita S."/>
            <person name="Honda M."/>
            <person name="Ichikawa Y."/>
            <person name="Idonuma A."/>
            <person name="Iijima M."/>
            <person name="Ikeda M."/>
            <person name="Ikeno M."/>
            <person name="Ito S."/>
            <person name="Ito T."/>
            <person name="Ito Y."/>
            <person name="Ito Y."/>
            <person name="Iwabuchi A."/>
            <person name="Kamiya K."/>
            <person name="Karasawa W."/>
            <person name="Katagiri S."/>
            <person name="Kikuta A."/>
            <person name="Kobayashi N."/>
            <person name="Kono I."/>
            <person name="Machita K."/>
            <person name="Maehara T."/>
            <person name="Mizuno H."/>
            <person name="Mizubayashi T."/>
            <person name="Mukai Y."/>
            <person name="Nagasaki H."/>
            <person name="Nakashima M."/>
            <person name="Nakama Y."/>
            <person name="Nakamichi Y."/>
            <person name="Nakamura M."/>
            <person name="Namiki N."/>
            <person name="Negishi M."/>
            <person name="Ohta I."/>
            <person name="Ono N."/>
            <person name="Saji S."/>
            <person name="Sakai K."/>
            <person name="Shibata M."/>
            <person name="Shimokawa T."/>
            <person name="Shomura A."/>
            <person name="Song J."/>
            <person name="Takazaki Y."/>
            <person name="Terasawa K."/>
            <person name="Tsuji K."/>
            <person name="Waki K."/>
            <person name="Yamagata H."/>
            <person name="Yamane H."/>
            <person name="Yoshiki S."/>
            <person name="Yoshihara R."/>
            <person name="Yukawa K."/>
            <person name="Zhong H."/>
            <person name="Iwama H."/>
            <person name="Endo T."/>
            <person name="Ito H."/>
            <person name="Hahn J.H."/>
            <person name="Kim H.-I."/>
            <person name="Eun M.-Y."/>
            <person name="Yano M."/>
            <person name="Jiang J."/>
            <person name="Gojobori T."/>
        </authorList>
    </citation>
    <scope>NUCLEOTIDE SEQUENCE [LARGE SCALE GENOMIC DNA]</scope>
    <source>
        <strain>cv. Nipponbare</strain>
    </source>
</reference>
<reference key="3">
    <citation type="journal article" date="2005" name="Nature">
        <title>The map-based sequence of the rice genome.</title>
        <authorList>
            <consortium name="International rice genome sequencing project (IRGSP)"/>
        </authorList>
    </citation>
    <scope>NUCLEOTIDE SEQUENCE [LARGE SCALE GENOMIC DNA]</scope>
    <source>
        <strain>cv. Nipponbare</strain>
    </source>
</reference>
<reference key="4">
    <citation type="journal article" date="2008" name="Nucleic Acids Res.">
        <title>The rice annotation project database (RAP-DB): 2008 update.</title>
        <authorList>
            <consortium name="The rice annotation project (RAP)"/>
        </authorList>
    </citation>
    <scope>GENOME REANNOTATION</scope>
    <source>
        <strain>cv. Nipponbare</strain>
    </source>
</reference>
<reference key="5">
    <citation type="journal article" date="2013" name="Rice">
        <title>Improvement of the Oryza sativa Nipponbare reference genome using next generation sequence and optical map data.</title>
        <authorList>
            <person name="Kawahara Y."/>
            <person name="de la Bastide M."/>
            <person name="Hamilton J.P."/>
            <person name="Kanamori H."/>
            <person name="McCombie W.R."/>
            <person name="Ouyang S."/>
            <person name="Schwartz D.C."/>
            <person name="Tanaka T."/>
            <person name="Wu J."/>
            <person name="Zhou S."/>
            <person name="Childs K.L."/>
            <person name="Davidson R.M."/>
            <person name="Lin H."/>
            <person name="Quesada-Ocampo L."/>
            <person name="Vaillancourt B."/>
            <person name="Sakai H."/>
            <person name="Lee S.S."/>
            <person name="Kim J."/>
            <person name="Numa H."/>
            <person name="Itoh T."/>
            <person name="Buell C.R."/>
            <person name="Matsumoto T."/>
        </authorList>
    </citation>
    <scope>GENOME REANNOTATION</scope>
    <source>
        <strain>cv. Nipponbare</strain>
    </source>
</reference>
<reference key="6">
    <citation type="journal article" date="2003" name="Science">
        <title>Collection, mapping, and annotation of over 28,000 cDNA clones from japonica rice.</title>
        <authorList>
            <consortium name="The rice full-length cDNA consortium"/>
        </authorList>
    </citation>
    <scope>NUCLEOTIDE SEQUENCE [LARGE SCALE MRNA] OF 1056-1426</scope>
    <source>
        <strain>cv. Nipponbare</strain>
    </source>
</reference>
<reference key="7">
    <citation type="journal article" date="2006" name="FEBS Lett.">
        <title>Organization and function of the plant pleiotropic drug resistance ABC transporter family.</title>
        <authorList>
            <person name="Crouzet J."/>
            <person name="Trombik T."/>
            <person name="Fraysse A.S."/>
            <person name="Boutry M."/>
        </authorList>
    </citation>
    <scope>GENE FAMILY</scope>
    <scope>NOMENCLATURE</scope>
</reference>
<reference key="8">
    <citation type="journal article" date="2008" name="Trends Plant Sci.">
        <title>Plant ABC proteins - a unified nomenclature and updated inventory.</title>
        <authorList>
            <person name="Verrier P.J."/>
            <person name="Bird D."/>
            <person name="Burla B."/>
            <person name="Dassa E."/>
            <person name="Forestier C."/>
            <person name="Geisler M."/>
            <person name="Klein M."/>
            <person name="Kolukisaoglu H.U."/>
            <person name="Lee Y."/>
            <person name="Martinoia E."/>
            <person name="Murphy A."/>
            <person name="Rea P.A."/>
            <person name="Samuels L."/>
            <person name="Schulz B."/>
            <person name="Spalding E.J."/>
            <person name="Yazaki K."/>
            <person name="Theodoulou F.L."/>
        </authorList>
    </citation>
    <scope>GENE FAMILY</scope>
    <scope>NOMENCLATURE</scope>
</reference>